<dbReference type="EMBL" id="AB116233">
    <property type="protein sequence ID" value="BAD67168.1"/>
    <property type="molecule type" value="mRNA"/>
</dbReference>
<dbReference type="EMBL" id="AB158497">
    <property type="protein sequence ID" value="BAD67172.1"/>
    <property type="molecule type" value="Genomic_DNA"/>
</dbReference>
<dbReference type="SMR" id="Q5W9T5"/>
<dbReference type="GlyCosmos" id="Q5W9T5">
    <property type="glycosylation" value="3 sites, No reported glycans"/>
</dbReference>
<dbReference type="Proteomes" id="UP000515154">
    <property type="component" value="Unplaced"/>
</dbReference>
<dbReference type="GO" id="GO:0005886">
    <property type="term" value="C:plasma membrane"/>
    <property type="evidence" value="ECO:0007669"/>
    <property type="project" value="UniProtKB-SubCell"/>
</dbReference>
<dbReference type="GO" id="GO:0004930">
    <property type="term" value="F:G protein-coupled receptor activity"/>
    <property type="evidence" value="ECO:0000304"/>
    <property type="project" value="UniProtKB"/>
</dbReference>
<dbReference type="GO" id="GO:0042277">
    <property type="term" value="F:peptide binding"/>
    <property type="evidence" value="ECO:0007669"/>
    <property type="project" value="TreeGrafter"/>
</dbReference>
<dbReference type="GO" id="GO:0005000">
    <property type="term" value="F:vasopressin receptor activity"/>
    <property type="evidence" value="ECO:0007669"/>
    <property type="project" value="InterPro"/>
</dbReference>
<dbReference type="GO" id="GO:0032870">
    <property type="term" value="P:cellular response to hormone stimulus"/>
    <property type="evidence" value="ECO:0007669"/>
    <property type="project" value="TreeGrafter"/>
</dbReference>
<dbReference type="GO" id="GO:0007186">
    <property type="term" value="P:G protein-coupled receptor signaling pathway"/>
    <property type="evidence" value="ECO:0000304"/>
    <property type="project" value="UniProtKB"/>
</dbReference>
<dbReference type="CDD" id="cd15196">
    <property type="entry name" value="7tmA_Vasopressin_Oxytocin"/>
    <property type="match status" value="1"/>
</dbReference>
<dbReference type="FunFam" id="1.20.1070.10:FF:001077">
    <property type="entry name" value="Octopressin receptor"/>
    <property type="match status" value="1"/>
</dbReference>
<dbReference type="Gene3D" id="1.20.1070.10">
    <property type="entry name" value="Rhodopsin 7-helix transmembrane proteins"/>
    <property type="match status" value="1"/>
</dbReference>
<dbReference type="InterPro" id="IPR000276">
    <property type="entry name" value="GPCR_Rhodpsn"/>
</dbReference>
<dbReference type="InterPro" id="IPR017452">
    <property type="entry name" value="GPCR_Rhodpsn_7TM"/>
</dbReference>
<dbReference type="InterPro" id="IPR001817">
    <property type="entry name" value="Vasoprsn_rcpt"/>
</dbReference>
<dbReference type="PANTHER" id="PTHR24241:SF161">
    <property type="entry name" value="G-PROTEIN COUPLED RECEPTORS FAMILY 1 PROFILE DOMAIN-CONTAINING PROTEIN"/>
    <property type="match status" value="1"/>
</dbReference>
<dbReference type="PANTHER" id="PTHR24241">
    <property type="entry name" value="NEUROPEPTIDE RECEPTOR-RELATED G-PROTEIN COUPLED RECEPTOR"/>
    <property type="match status" value="1"/>
</dbReference>
<dbReference type="Pfam" id="PF00001">
    <property type="entry name" value="7tm_1"/>
    <property type="match status" value="1"/>
</dbReference>
<dbReference type="PRINTS" id="PR00237">
    <property type="entry name" value="GPCRRHODOPSN"/>
</dbReference>
<dbReference type="PRINTS" id="PR00896">
    <property type="entry name" value="VASOPRESSINR"/>
</dbReference>
<dbReference type="SUPFAM" id="SSF81321">
    <property type="entry name" value="Family A G protein-coupled receptor-like"/>
    <property type="match status" value="1"/>
</dbReference>
<dbReference type="PROSITE" id="PS00237">
    <property type="entry name" value="G_PROTEIN_RECEP_F1_1"/>
    <property type="match status" value="1"/>
</dbReference>
<dbReference type="PROSITE" id="PS50262">
    <property type="entry name" value="G_PROTEIN_RECEP_F1_2"/>
    <property type="match status" value="1"/>
</dbReference>
<proteinExistence type="evidence at transcript level"/>
<gene>
    <name evidence="8" type="primary">OPR</name>
    <name evidence="7" type="synonym">OTR</name>
</gene>
<comment type="function">
    <text evidence="5">Acts as a receptor for octopressin.</text>
</comment>
<comment type="subcellular location">
    <subcellularLocation>
        <location evidence="6">Cell membrane</location>
        <topology evidence="2">Multi-pass membrane protein</topology>
    </subcellularLocation>
</comment>
<comment type="tissue specificity">
    <text evidence="5">Present in the nervous system and peripheral tissues.</text>
</comment>
<comment type="similarity">
    <text evidence="3">Belongs to the G-protein coupled receptor 1 family. Vasopressin/oxytocin receptor subfamily.</text>
</comment>
<keyword id="KW-1003">Cell membrane</keyword>
<keyword id="KW-1015">Disulfide bond</keyword>
<keyword id="KW-0297">G-protein coupled receptor</keyword>
<keyword id="KW-0325">Glycoprotein</keyword>
<keyword id="KW-0472">Membrane</keyword>
<keyword id="KW-0675">Receptor</keyword>
<keyword id="KW-1185">Reference proteome</keyword>
<keyword id="KW-0807">Transducer</keyword>
<keyword id="KW-0812">Transmembrane</keyword>
<keyword id="KW-1133">Transmembrane helix</keyword>
<name>OPR_OCTVU</name>
<feature type="chain" id="PRO_0000235830" description="Octopressin receptor">
    <location>
        <begin position="1"/>
        <end position="419"/>
    </location>
</feature>
<feature type="topological domain" description="Extracellular" evidence="2">
    <location>
        <begin position="1"/>
        <end position="37"/>
    </location>
</feature>
<feature type="transmembrane region" description="Helical; Name=1" evidence="2">
    <location>
        <begin position="38"/>
        <end position="58"/>
    </location>
</feature>
<feature type="topological domain" description="Cytoplasmic" evidence="2">
    <location>
        <begin position="59"/>
        <end position="80"/>
    </location>
</feature>
<feature type="transmembrane region" description="Helical; Name=2" evidence="2">
    <location>
        <begin position="81"/>
        <end position="101"/>
    </location>
</feature>
<feature type="topological domain" description="Extracellular" evidence="2">
    <location>
        <begin position="102"/>
        <end position="108"/>
    </location>
</feature>
<feature type="transmembrane region" description="Helical; Name=3" evidence="2">
    <location>
        <begin position="109"/>
        <end position="129"/>
    </location>
</feature>
<feature type="topological domain" description="Cytoplasmic" evidence="2">
    <location>
        <begin position="130"/>
        <end position="153"/>
    </location>
</feature>
<feature type="transmembrane region" description="Helical; Name=4" evidence="2">
    <location>
        <begin position="154"/>
        <end position="174"/>
    </location>
</feature>
<feature type="topological domain" description="Extracellular" evidence="2">
    <location>
        <begin position="175"/>
        <end position="192"/>
    </location>
</feature>
<feature type="transmembrane region" description="Helical; Name=5" evidence="2">
    <location>
        <begin position="193"/>
        <end position="213"/>
    </location>
</feature>
<feature type="topological domain" description="Cytoplasmic" evidence="2">
    <location>
        <begin position="214"/>
        <end position="292"/>
    </location>
</feature>
<feature type="transmembrane region" description="Helical; Name=6" evidence="2">
    <location>
        <begin position="293"/>
        <end position="313"/>
    </location>
</feature>
<feature type="topological domain" description="Extracellular" evidence="2">
    <location>
        <begin position="314"/>
        <end position="329"/>
    </location>
</feature>
<feature type="transmembrane region" description="Helical; Name=7" evidence="2">
    <location>
        <begin position="330"/>
        <end position="350"/>
    </location>
</feature>
<feature type="topological domain" description="Cytoplasmic" evidence="2">
    <location>
        <begin position="351"/>
        <end position="419"/>
    </location>
</feature>
<feature type="region of interest" description="Disordered" evidence="4">
    <location>
        <begin position="253"/>
        <end position="274"/>
    </location>
</feature>
<feature type="compositionally biased region" description="Basic and acidic residues" evidence="4">
    <location>
        <begin position="259"/>
        <end position="274"/>
    </location>
</feature>
<feature type="glycosylation site" description="N-linked (GlcNAc...) asparagine" evidence="2">
    <location>
        <position position="3"/>
    </location>
</feature>
<feature type="glycosylation site" description="N-linked (GlcNAc...) asparagine" evidence="2">
    <location>
        <position position="22"/>
    </location>
</feature>
<feature type="glycosylation site" description="N-linked (GlcNAc...) asparagine" evidence="2">
    <location>
        <position position="185"/>
    </location>
</feature>
<feature type="disulfide bond" evidence="1 3">
    <location>
        <begin position="107"/>
        <end position="182"/>
    </location>
</feature>
<organism>
    <name type="scientific">Octopus vulgaris</name>
    <name type="common">Common octopus</name>
    <dbReference type="NCBI Taxonomy" id="6645"/>
    <lineage>
        <taxon>Eukaryota</taxon>
        <taxon>Metazoa</taxon>
        <taxon>Spiralia</taxon>
        <taxon>Lophotrochozoa</taxon>
        <taxon>Mollusca</taxon>
        <taxon>Cephalopoda</taxon>
        <taxon>Coleoidea</taxon>
        <taxon>Octopodiformes</taxon>
        <taxon>Octopoda</taxon>
        <taxon>Incirrata</taxon>
        <taxon>Octopodidae</taxon>
        <taxon>Octopus</taxon>
    </lineage>
</organism>
<sequence>MENFTEENLHPWITTTTRVYNNVTIFPQYDDELGKFEIMVLCILCFMALFGNAVVLIVLRIKKTTLTRMQLLIVYLSVTDISVALFHILPTIILKINVYFLGDISACRVYQFITVAELYASSFVLIVTALDRYISICHPLAAHMWTNRRVHMTTALALFLALMCSLPQLDAVLVDFHGGKLCRPNLTTELANIAYSWWAFCSVFFVPLLLLIFFYGRICFVVWQSMRGRECTQSVGSSASRYVRKPIKCRISSQTSSENRVKNYSDARDKDSSRNPRAICRGVSKSKIKTIKLTFSVVACFIICYTPFFTVLMARTYDAELSSAQTPALVILSLLPSLNSCTNPWIYLAFSGKVWCRQQSQNFPRTWTQTTNTYLVELEAKKRTSFGAEHVTFASNSTARKTLNVDDTNTTALMSSSPC</sequence>
<accession>Q5W9T5</accession>
<reference evidence="6 8" key="1">
    <citation type="journal article" date="2005" name="Biochem. J.">
        <title>Novel evolutionary lineages of the invertebrate oxytocin/vasopressin superfamily peptides and their receptors in the common octopus (Octopus vulgaris).</title>
        <authorList>
            <person name="Kanda A."/>
            <person name="Satake H."/>
            <person name="Kawada T."/>
            <person name="Minakata H."/>
        </authorList>
    </citation>
    <scope>NUCLEOTIDE SEQUENCE [GENOMIC DNA / MRNA]</scope>
    <scope>FUNCTION</scope>
    <scope>TISSUE SPECIFICITY</scope>
    <source>
        <tissue evidence="8">Vein</tissue>
    </source>
</reference>
<evidence type="ECO:0000250" key="1">
    <source>
        <dbReference type="UniProtKB" id="P34981"/>
    </source>
</evidence>
<evidence type="ECO:0000255" key="2"/>
<evidence type="ECO:0000255" key="3">
    <source>
        <dbReference type="PROSITE-ProRule" id="PRU00521"/>
    </source>
</evidence>
<evidence type="ECO:0000256" key="4">
    <source>
        <dbReference type="SAM" id="MobiDB-lite"/>
    </source>
</evidence>
<evidence type="ECO:0000269" key="5">
    <source>
    </source>
</evidence>
<evidence type="ECO:0000305" key="6"/>
<evidence type="ECO:0000312" key="7">
    <source>
        <dbReference type="EMBL" id="BAD67168.1"/>
    </source>
</evidence>
<evidence type="ECO:0000312" key="8">
    <source>
        <dbReference type="EMBL" id="BAD67172.1"/>
    </source>
</evidence>
<protein>
    <recommendedName>
        <fullName>Octopressin receptor</fullName>
    </recommendedName>
</protein>